<sequence>MIDFRPFYQHIATTHLSAWLETLPLQLKQWEKQTHGDYAKWAKIVDFLPHLDADHIDLKSAVKSESVSPLSAGEQQRLVYHLKQLMPWRKGPYHLHGIHIDCEWRSDFKWDRVLPHLAPLKDRTILDVGCGSGYHMWRMVGEGAKIVVGIDPTELFLCQFEAVRKLLNNDRRANLIPLGIEQMQPLAAFDTVFSMGVLYHRKSPLDHLSQLKNQLVRGGELVLETLVVDGDINTVLVPADRYAKMKNVYFIPSVPALINWLEKVGFKNVRCVDVAPTSLAEQRKTDWLENESLIDFLDPCDHTKTIEGYQAPTRAVILANK</sequence>
<gene>
    <name evidence="1" type="primary">cmoB</name>
    <name type="ordered locus">PM0340</name>
</gene>
<dbReference type="EC" id="2.5.1.-" evidence="1"/>
<dbReference type="EMBL" id="AE004439">
    <property type="protein sequence ID" value="AAK02424.1"/>
    <property type="molecule type" value="Genomic_DNA"/>
</dbReference>
<dbReference type="RefSeq" id="WP_010906598.1">
    <property type="nucleotide sequence ID" value="NC_002663.1"/>
</dbReference>
<dbReference type="SMR" id="Q9CNT5"/>
<dbReference type="STRING" id="272843.PM0340"/>
<dbReference type="EnsemblBacteria" id="AAK02424">
    <property type="protein sequence ID" value="AAK02424"/>
    <property type="gene ID" value="PM0340"/>
</dbReference>
<dbReference type="KEGG" id="pmu:PM0340"/>
<dbReference type="PATRIC" id="fig|272843.6.peg.353"/>
<dbReference type="HOGENOM" id="CLU_052665_0_0_6"/>
<dbReference type="OrthoDB" id="9773188at2"/>
<dbReference type="Proteomes" id="UP000000809">
    <property type="component" value="Chromosome"/>
</dbReference>
<dbReference type="GO" id="GO:0008168">
    <property type="term" value="F:methyltransferase activity"/>
    <property type="evidence" value="ECO:0007669"/>
    <property type="project" value="TreeGrafter"/>
</dbReference>
<dbReference type="GO" id="GO:0016765">
    <property type="term" value="F:transferase activity, transferring alkyl or aryl (other than methyl) groups"/>
    <property type="evidence" value="ECO:0007669"/>
    <property type="project" value="UniProtKB-UniRule"/>
</dbReference>
<dbReference type="GO" id="GO:0002098">
    <property type="term" value="P:tRNA wobble uridine modification"/>
    <property type="evidence" value="ECO:0007669"/>
    <property type="project" value="InterPro"/>
</dbReference>
<dbReference type="CDD" id="cd02440">
    <property type="entry name" value="AdoMet_MTases"/>
    <property type="match status" value="1"/>
</dbReference>
<dbReference type="Gene3D" id="3.40.50.150">
    <property type="entry name" value="Vaccinia Virus protein VP39"/>
    <property type="match status" value="1"/>
</dbReference>
<dbReference type="HAMAP" id="MF_01590">
    <property type="entry name" value="tRNA_carboxymethyltr_CmoB"/>
    <property type="match status" value="1"/>
</dbReference>
<dbReference type="InterPro" id="IPR010017">
    <property type="entry name" value="CmoB"/>
</dbReference>
<dbReference type="InterPro" id="IPR027555">
    <property type="entry name" value="Mo5U34_MeTrfas-like"/>
</dbReference>
<dbReference type="InterPro" id="IPR029063">
    <property type="entry name" value="SAM-dependent_MTases_sf"/>
</dbReference>
<dbReference type="NCBIfam" id="NF011650">
    <property type="entry name" value="PRK15068.1"/>
    <property type="match status" value="1"/>
</dbReference>
<dbReference type="NCBIfam" id="TIGR00452">
    <property type="entry name" value="tRNA 5-methoxyuridine(34)/uridine 5-oxyacetic acid(34) synthase CmoB"/>
    <property type="match status" value="1"/>
</dbReference>
<dbReference type="PANTHER" id="PTHR43464">
    <property type="entry name" value="METHYLTRANSFERASE"/>
    <property type="match status" value="1"/>
</dbReference>
<dbReference type="PANTHER" id="PTHR43464:SF95">
    <property type="entry name" value="TRNA U34 CARBOXYMETHYLTRANSFERASE"/>
    <property type="match status" value="1"/>
</dbReference>
<dbReference type="Pfam" id="PF08003">
    <property type="entry name" value="Methyltransf_9"/>
    <property type="match status" value="1"/>
</dbReference>
<dbReference type="SUPFAM" id="SSF53335">
    <property type="entry name" value="S-adenosyl-L-methionine-dependent methyltransferases"/>
    <property type="match status" value="1"/>
</dbReference>
<organism>
    <name type="scientific">Pasteurella multocida (strain Pm70)</name>
    <dbReference type="NCBI Taxonomy" id="272843"/>
    <lineage>
        <taxon>Bacteria</taxon>
        <taxon>Pseudomonadati</taxon>
        <taxon>Pseudomonadota</taxon>
        <taxon>Gammaproteobacteria</taxon>
        <taxon>Pasteurellales</taxon>
        <taxon>Pasteurellaceae</taxon>
        <taxon>Pasteurella</taxon>
    </lineage>
</organism>
<keyword id="KW-1185">Reference proteome</keyword>
<keyword id="KW-0808">Transferase</keyword>
<keyword id="KW-0819">tRNA processing</keyword>
<evidence type="ECO:0000255" key="1">
    <source>
        <dbReference type="HAMAP-Rule" id="MF_01590"/>
    </source>
</evidence>
<reference key="1">
    <citation type="journal article" date="2001" name="Proc. Natl. Acad. Sci. U.S.A.">
        <title>Complete genomic sequence of Pasteurella multocida Pm70.</title>
        <authorList>
            <person name="May B.J."/>
            <person name="Zhang Q."/>
            <person name="Li L.L."/>
            <person name="Paustian M.L."/>
            <person name="Whittam T.S."/>
            <person name="Kapur V."/>
        </authorList>
    </citation>
    <scope>NUCLEOTIDE SEQUENCE [LARGE SCALE GENOMIC DNA]</scope>
    <source>
        <strain>Pm70</strain>
    </source>
</reference>
<comment type="function">
    <text evidence="1">Catalyzes carboxymethyl transfer from carboxy-S-adenosyl-L-methionine (Cx-SAM) to 5-hydroxyuridine (ho5U) to form 5-carboxymethoxyuridine (cmo5U) at position 34 in tRNAs.</text>
</comment>
<comment type="catalytic activity">
    <reaction evidence="1">
        <text>carboxy-S-adenosyl-L-methionine + 5-hydroxyuridine(34) in tRNA = 5-carboxymethoxyuridine(34) in tRNA + S-adenosyl-L-homocysteine + H(+)</text>
        <dbReference type="Rhea" id="RHEA:52848"/>
        <dbReference type="Rhea" id="RHEA-COMP:13381"/>
        <dbReference type="Rhea" id="RHEA-COMP:13383"/>
        <dbReference type="ChEBI" id="CHEBI:15378"/>
        <dbReference type="ChEBI" id="CHEBI:57856"/>
        <dbReference type="ChEBI" id="CHEBI:134278"/>
        <dbReference type="ChEBI" id="CHEBI:136877"/>
        <dbReference type="ChEBI" id="CHEBI:136879"/>
    </reaction>
</comment>
<comment type="subunit">
    <text evidence="1">Homotetramer.</text>
</comment>
<comment type="similarity">
    <text evidence="1">Belongs to the class I-like SAM-binding methyltransferase superfamily. CmoB family.</text>
</comment>
<proteinExistence type="inferred from homology"/>
<accession>Q9CNT5</accession>
<name>CMOB_PASMU</name>
<feature type="chain" id="PRO_0000313938" description="tRNA U34 carboxymethyltransferase">
    <location>
        <begin position="1"/>
        <end position="321"/>
    </location>
</feature>
<feature type="binding site" evidence="1">
    <location>
        <position position="90"/>
    </location>
    <ligand>
        <name>carboxy-S-adenosyl-L-methionine</name>
        <dbReference type="ChEBI" id="CHEBI:134278"/>
    </ligand>
</feature>
<feature type="binding site" evidence="1">
    <location>
        <position position="104"/>
    </location>
    <ligand>
        <name>carboxy-S-adenosyl-L-methionine</name>
        <dbReference type="ChEBI" id="CHEBI:134278"/>
    </ligand>
</feature>
<feature type="binding site" evidence="1">
    <location>
        <position position="109"/>
    </location>
    <ligand>
        <name>carboxy-S-adenosyl-L-methionine</name>
        <dbReference type="ChEBI" id="CHEBI:134278"/>
    </ligand>
</feature>
<feature type="binding site" evidence="1">
    <location>
        <position position="129"/>
    </location>
    <ligand>
        <name>carboxy-S-adenosyl-L-methionine</name>
        <dbReference type="ChEBI" id="CHEBI:134278"/>
    </ligand>
</feature>
<feature type="binding site" evidence="1">
    <location>
        <begin position="151"/>
        <end position="153"/>
    </location>
    <ligand>
        <name>carboxy-S-adenosyl-L-methionine</name>
        <dbReference type="ChEBI" id="CHEBI:134278"/>
    </ligand>
</feature>
<feature type="binding site" evidence="1">
    <location>
        <begin position="180"/>
        <end position="181"/>
    </location>
    <ligand>
        <name>carboxy-S-adenosyl-L-methionine</name>
        <dbReference type="ChEBI" id="CHEBI:134278"/>
    </ligand>
</feature>
<feature type="binding site" evidence="1">
    <location>
        <position position="195"/>
    </location>
    <ligand>
        <name>carboxy-S-adenosyl-L-methionine</name>
        <dbReference type="ChEBI" id="CHEBI:134278"/>
    </ligand>
</feature>
<feature type="binding site" evidence="1">
    <location>
        <position position="199"/>
    </location>
    <ligand>
        <name>carboxy-S-adenosyl-L-methionine</name>
        <dbReference type="ChEBI" id="CHEBI:134278"/>
    </ligand>
</feature>
<feature type="binding site" evidence="1">
    <location>
        <position position="314"/>
    </location>
    <ligand>
        <name>carboxy-S-adenosyl-L-methionine</name>
        <dbReference type="ChEBI" id="CHEBI:134278"/>
    </ligand>
</feature>
<protein>
    <recommendedName>
        <fullName evidence="1">tRNA U34 carboxymethyltransferase</fullName>
        <ecNumber evidence="1">2.5.1.-</ecNumber>
    </recommendedName>
</protein>